<comment type="function">
    <text evidence="1">Catalyzes a proton abstraction reaction that results in 2,5-elimination of pyruvate from 2-succinyl-5-enolpyruvyl-6-hydroxy-3-cyclohexene-1-carboxylate (SEPHCHC) and the formation of 2-succinyl-6-hydroxy-2,4-cyclohexadiene-1-carboxylate (SHCHC).</text>
</comment>
<comment type="catalytic activity">
    <reaction evidence="1">
        <text>5-enolpyruvoyl-6-hydroxy-2-succinyl-cyclohex-3-ene-1-carboxylate = (1R,6R)-6-hydroxy-2-succinyl-cyclohexa-2,4-diene-1-carboxylate + pyruvate</text>
        <dbReference type="Rhea" id="RHEA:25597"/>
        <dbReference type="ChEBI" id="CHEBI:15361"/>
        <dbReference type="ChEBI" id="CHEBI:58689"/>
        <dbReference type="ChEBI" id="CHEBI:58818"/>
        <dbReference type="EC" id="4.2.99.20"/>
    </reaction>
</comment>
<comment type="pathway">
    <text evidence="1">Quinol/quinone metabolism; 1,4-dihydroxy-2-naphthoate biosynthesis; 1,4-dihydroxy-2-naphthoate from chorismate: step 3/7.</text>
</comment>
<comment type="pathway">
    <text evidence="1">Quinol/quinone metabolism; menaquinone biosynthesis.</text>
</comment>
<comment type="subunit">
    <text evidence="1">Monomer.</text>
</comment>
<comment type="similarity">
    <text evidence="1">Belongs to the AB hydrolase superfamily. MenH family.</text>
</comment>
<proteinExistence type="inferred from homology"/>
<gene>
    <name evidence="1" type="primary">menH</name>
    <name type="synonym">mhpC3</name>
    <name type="ordered locus">YPO2526</name>
    <name type="ordered locus">y1661</name>
    <name type="ordered locus">YP_2337</name>
</gene>
<sequence>MTTLACRKLAPHPESPRHQHAGPWLVWLHGLLGSGQDWLPVAQLCGDYPSLLIDLPGHGQSVSLSADGFADISRQLSQTLQANGIREYWLAGYSLGGRIAIYHACYGRHHGLQGLLVEGGNLGLENAELRQARLQQDRQWAQRFRQEPLPQVLDDWYQQAVFADLDPQQREQLVLLRADNHGPAVAEMLEATSLGHQPWLLPALQRLNVPYTYLCGDRDHKFLQLAQQYRLPLHTLARAGHNAHRANPGAFAAQVLAFLSQSSCLPPSSLSR</sequence>
<evidence type="ECO:0000255" key="1">
    <source>
        <dbReference type="HAMAP-Rule" id="MF_01660"/>
    </source>
</evidence>
<accession>Q7CJ75</accession>
<accession>Q74T54</accession>
<reference key="1">
    <citation type="journal article" date="2002" name="J. Bacteriol.">
        <title>Genome sequence of Yersinia pestis KIM.</title>
        <authorList>
            <person name="Deng W."/>
            <person name="Burland V."/>
            <person name="Plunkett G. III"/>
            <person name="Boutin A."/>
            <person name="Mayhew G.F."/>
            <person name="Liss P."/>
            <person name="Perna N.T."/>
            <person name="Rose D.J."/>
            <person name="Mau B."/>
            <person name="Zhou S."/>
            <person name="Schwartz D.C."/>
            <person name="Fetherston J.D."/>
            <person name="Lindler L.E."/>
            <person name="Brubaker R.R."/>
            <person name="Plano G.V."/>
            <person name="Straley S.C."/>
            <person name="McDonough K.A."/>
            <person name="Nilles M.L."/>
            <person name="Matson J.S."/>
            <person name="Blattner F.R."/>
            <person name="Perry R.D."/>
        </authorList>
    </citation>
    <scope>NUCLEOTIDE SEQUENCE [LARGE SCALE GENOMIC DNA]</scope>
    <source>
        <strain>KIM10+ / Biovar Mediaevalis</strain>
    </source>
</reference>
<reference key="2">
    <citation type="journal article" date="2001" name="Nature">
        <title>Genome sequence of Yersinia pestis, the causative agent of plague.</title>
        <authorList>
            <person name="Parkhill J."/>
            <person name="Wren B.W."/>
            <person name="Thomson N.R."/>
            <person name="Titball R.W."/>
            <person name="Holden M.T.G."/>
            <person name="Prentice M.B."/>
            <person name="Sebaihia M."/>
            <person name="James K.D."/>
            <person name="Churcher C.M."/>
            <person name="Mungall K.L."/>
            <person name="Baker S."/>
            <person name="Basham D."/>
            <person name="Bentley S.D."/>
            <person name="Brooks K."/>
            <person name="Cerdeno-Tarraga A.-M."/>
            <person name="Chillingworth T."/>
            <person name="Cronin A."/>
            <person name="Davies R.M."/>
            <person name="Davis P."/>
            <person name="Dougan G."/>
            <person name="Feltwell T."/>
            <person name="Hamlin N."/>
            <person name="Holroyd S."/>
            <person name="Jagels K."/>
            <person name="Karlyshev A.V."/>
            <person name="Leather S."/>
            <person name="Moule S."/>
            <person name="Oyston P.C.F."/>
            <person name="Quail M.A."/>
            <person name="Rutherford K.M."/>
            <person name="Simmonds M."/>
            <person name="Skelton J."/>
            <person name="Stevens K."/>
            <person name="Whitehead S."/>
            <person name="Barrell B.G."/>
        </authorList>
    </citation>
    <scope>NUCLEOTIDE SEQUENCE [LARGE SCALE GENOMIC DNA]</scope>
    <source>
        <strain>CO-92 / Biovar Orientalis</strain>
    </source>
</reference>
<reference key="3">
    <citation type="journal article" date="2004" name="DNA Res.">
        <title>Complete genome sequence of Yersinia pestis strain 91001, an isolate avirulent to humans.</title>
        <authorList>
            <person name="Song Y."/>
            <person name="Tong Z."/>
            <person name="Wang J."/>
            <person name="Wang L."/>
            <person name="Guo Z."/>
            <person name="Han Y."/>
            <person name="Zhang J."/>
            <person name="Pei D."/>
            <person name="Zhou D."/>
            <person name="Qin H."/>
            <person name="Pang X."/>
            <person name="Han Y."/>
            <person name="Zhai J."/>
            <person name="Li M."/>
            <person name="Cui B."/>
            <person name="Qi Z."/>
            <person name="Jin L."/>
            <person name="Dai R."/>
            <person name="Chen F."/>
            <person name="Li S."/>
            <person name="Ye C."/>
            <person name="Du Z."/>
            <person name="Lin W."/>
            <person name="Wang J."/>
            <person name="Yu J."/>
            <person name="Yang H."/>
            <person name="Wang J."/>
            <person name="Huang P."/>
            <person name="Yang R."/>
        </authorList>
    </citation>
    <scope>NUCLEOTIDE SEQUENCE [LARGE SCALE GENOMIC DNA]</scope>
    <source>
        <strain>91001 / Biovar Mediaevalis</strain>
    </source>
</reference>
<feature type="chain" id="PRO_0000341930" description="2-succinyl-6-hydroxy-2,4-cyclohexadiene-1-carboxylate synthase">
    <location>
        <begin position="1"/>
        <end position="272"/>
    </location>
</feature>
<organism>
    <name type="scientific">Yersinia pestis</name>
    <dbReference type="NCBI Taxonomy" id="632"/>
    <lineage>
        <taxon>Bacteria</taxon>
        <taxon>Pseudomonadati</taxon>
        <taxon>Pseudomonadota</taxon>
        <taxon>Gammaproteobacteria</taxon>
        <taxon>Enterobacterales</taxon>
        <taxon>Yersiniaceae</taxon>
        <taxon>Yersinia</taxon>
    </lineage>
</organism>
<name>MENH_YERPE</name>
<protein>
    <recommendedName>
        <fullName evidence="1">2-succinyl-6-hydroxy-2,4-cyclohexadiene-1-carboxylate synthase</fullName>
        <shortName evidence="1">SHCHC synthase</shortName>
        <ecNumber evidence="1">4.2.99.20</ecNumber>
    </recommendedName>
</protein>
<keyword id="KW-0456">Lyase</keyword>
<keyword id="KW-0474">Menaquinone biosynthesis</keyword>
<keyword id="KW-1185">Reference proteome</keyword>
<dbReference type="EC" id="4.2.99.20" evidence="1"/>
<dbReference type="EMBL" id="AE009952">
    <property type="protein sequence ID" value="AAM85230.1"/>
    <property type="molecule type" value="Genomic_DNA"/>
</dbReference>
<dbReference type="EMBL" id="AE017042">
    <property type="protein sequence ID" value="AAS62543.1"/>
    <property type="molecule type" value="Genomic_DNA"/>
</dbReference>
<dbReference type="EMBL" id="AL590842">
    <property type="protein sequence ID" value="CAL21152.1"/>
    <property type="molecule type" value="Genomic_DNA"/>
</dbReference>
<dbReference type="PIR" id="AE0308">
    <property type="entry name" value="AE0308"/>
</dbReference>
<dbReference type="RefSeq" id="WP_002210246.1">
    <property type="nucleotide sequence ID" value="NZ_WUCM01000021.1"/>
</dbReference>
<dbReference type="RefSeq" id="YP_002347488.1">
    <property type="nucleotide sequence ID" value="NC_003143.1"/>
</dbReference>
<dbReference type="SMR" id="Q7CJ75"/>
<dbReference type="STRING" id="214092.YPO2526"/>
<dbReference type="ESTHER" id="yerpe-YPO2526">
    <property type="family name" value="MenH_SHCHC"/>
</dbReference>
<dbReference type="PaxDb" id="214092-YPO2526"/>
<dbReference type="DNASU" id="1146608"/>
<dbReference type="EnsemblBacteria" id="AAS62543">
    <property type="protein sequence ID" value="AAS62543"/>
    <property type="gene ID" value="YP_2337"/>
</dbReference>
<dbReference type="GeneID" id="57976161"/>
<dbReference type="KEGG" id="ype:YPO2526"/>
<dbReference type="KEGG" id="ypk:y1661"/>
<dbReference type="KEGG" id="ypm:YP_2337"/>
<dbReference type="PATRIC" id="fig|214092.21.peg.2944"/>
<dbReference type="eggNOG" id="COG0596">
    <property type="taxonomic scope" value="Bacteria"/>
</dbReference>
<dbReference type="HOGENOM" id="CLU_020336_38_2_6"/>
<dbReference type="OMA" id="LNDWYQQ"/>
<dbReference type="OrthoDB" id="9808398at2"/>
<dbReference type="UniPathway" id="UPA00079"/>
<dbReference type="UniPathway" id="UPA01057">
    <property type="reaction ID" value="UER00900"/>
</dbReference>
<dbReference type="Proteomes" id="UP000000815">
    <property type="component" value="Chromosome"/>
</dbReference>
<dbReference type="Proteomes" id="UP000001019">
    <property type="component" value="Chromosome"/>
</dbReference>
<dbReference type="Proteomes" id="UP000002490">
    <property type="component" value="Chromosome"/>
</dbReference>
<dbReference type="GO" id="GO:0070205">
    <property type="term" value="F:2-succinyl-6-hydroxy-2,4-cyclohexadiene-1-carboxylate synthase activity"/>
    <property type="evidence" value="ECO:0007669"/>
    <property type="project" value="UniProtKB-UniRule"/>
</dbReference>
<dbReference type="GO" id="GO:0009234">
    <property type="term" value="P:menaquinone biosynthetic process"/>
    <property type="evidence" value="ECO:0007669"/>
    <property type="project" value="UniProtKB-UniRule"/>
</dbReference>
<dbReference type="Gene3D" id="3.40.50.1820">
    <property type="entry name" value="alpha/beta hydrolase"/>
    <property type="match status" value="1"/>
</dbReference>
<dbReference type="HAMAP" id="MF_01660">
    <property type="entry name" value="MenH"/>
    <property type="match status" value="1"/>
</dbReference>
<dbReference type="InterPro" id="IPR000073">
    <property type="entry name" value="AB_hydrolase_1"/>
</dbReference>
<dbReference type="InterPro" id="IPR029058">
    <property type="entry name" value="AB_hydrolase_fold"/>
</dbReference>
<dbReference type="InterPro" id="IPR022485">
    <property type="entry name" value="SHCHC_synthase_MenH"/>
</dbReference>
<dbReference type="NCBIfam" id="TIGR03695">
    <property type="entry name" value="menH_SHCHC"/>
    <property type="match status" value="1"/>
</dbReference>
<dbReference type="NCBIfam" id="NF008340">
    <property type="entry name" value="PRK11126.1"/>
    <property type="match status" value="1"/>
</dbReference>
<dbReference type="PANTHER" id="PTHR42916">
    <property type="entry name" value="2-SUCCINYL-5-ENOLPYRUVYL-6-HYDROXY-3-CYCLOHEXENE-1-CARBOXYLATE SYNTHASE"/>
    <property type="match status" value="1"/>
</dbReference>
<dbReference type="PANTHER" id="PTHR42916:SF1">
    <property type="entry name" value="PROTEIN PHYLLO, CHLOROPLASTIC"/>
    <property type="match status" value="1"/>
</dbReference>
<dbReference type="Pfam" id="PF12697">
    <property type="entry name" value="Abhydrolase_6"/>
    <property type="match status" value="1"/>
</dbReference>
<dbReference type="SUPFAM" id="SSF53474">
    <property type="entry name" value="alpha/beta-Hydrolases"/>
    <property type="match status" value="1"/>
</dbReference>